<comment type="subcellular location">
    <subcellularLocation>
        <location evidence="1">Cell membrane</location>
        <topology evidence="2">Single-pass membrane protein</topology>
    </subcellularLocation>
</comment>
<comment type="PTM">
    <text evidence="1">Phosphorylated by PknB (By similarity). Dephosphorylated by PstP (By similarity).</text>
</comment>
<comment type="caution">
    <text evidence="4">The article by Sureka et al was retracted by the editors after publication. Concerns were raised regarding the results presented in multiple figure panels. The raw data or replacement panels that were available did not satisfactorily address all the issues, thus questioning the integrity of the data.</text>
</comment>
<keyword id="KW-1003">Cell membrane</keyword>
<keyword id="KW-0472">Membrane</keyword>
<keyword id="KW-0597">Phosphoprotein</keyword>
<keyword id="KW-1185">Reference proteome</keyword>
<keyword id="KW-0812">Transmembrane</keyword>
<keyword id="KW-1133">Transmembrane helix</keyword>
<name>FHAB_MYCS2</name>
<proteinExistence type="inferred from homology"/>
<evidence type="ECO:0000250" key="1">
    <source>
        <dbReference type="UniProtKB" id="P9WJB5"/>
    </source>
</evidence>
<evidence type="ECO:0000255" key="2"/>
<evidence type="ECO:0000255" key="3">
    <source>
        <dbReference type="PROSITE-ProRule" id="PRU00086"/>
    </source>
</evidence>
<evidence type="ECO:0000305" key="4">
    <source>
    </source>
</evidence>
<protein>
    <recommendedName>
        <fullName>FHA domain-containing protein FhaB</fullName>
    </recommendedName>
    <alternativeName>
        <fullName>FtsZ-interacting protein A</fullName>
    </alternativeName>
</protein>
<feature type="chain" id="PRO_0000419672" description="FHA domain-containing protein FhaB">
    <location>
        <begin position="1"/>
        <end position="155"/>
    </location>
</feature>
<feature type="transmembrane region" description="Helical" evidence="2">
    <location>
        <begin position="6"/>
        <end position="28"/>
    </location>
</feature>
<feature type="domain" description="FHA" evidence="3">
    <location>
        <begin position="83"/>
        <end position="132"/>
    </location>
</feature>
<feature type="modified residue" description="Phosphothreonine" evidence="1">
    <location>
        <position position="36"/>
    </location>
</feature>
<dbReference type="EMBL" id="CP000480">
    <property type="protein sequence ID" value="ABK74891.1"/>
    <property type="molecule type" value="Genomic_DNA"/>
</dbReference>
<dbReference type="EMBL" id="CP001663">
    <property type="protein sequence ID" value="AFP36519.1"/>
    <property type="molecule type" value="Genomic_DNA"/>
</dbReference>
<dbReference type="RefSeq" id="WP_011726620.1">
    <property type="nucleotide sequence ID" value="NZ_SIJM01000001.1"/>
</dbReference>
<dbReference type="RefSeq" id="YP_884454.1">
    <property type="nucleotide sequence ID" value="NC_008596.1"/>
</dbReference>
<dbReference type="SMR" id="A0QNG6"/>
<dbReference type="STRING" id="246196.MSMEG_0034"/>
<dbReference type="PaxDb" id="246196-MSMEI_0036"/>
<dbReference type="KEGG" id="msb:LJ00_00170"/>
<dbReference type="KEGG" id="msg:MSMEI_0036"/>
<dbReference type="KEGG" id="msm:MSMEG_0034"/>
<dbReference type="PATRIC" id="fig|246196.19.peg.32"/>
<dbReference type="eggNOG" id="COG1716">
    <property type="taxonomic scope" value="Bacteria"/>
</dbReference>
<dbReference type="OrthoDB" id="277520at2"/>
<dbReference type="Proteomes" id="UP000000757">
    <property type="component" value="Chromosome"/>
</dbReference>
<dbReference type="Proteomes" id="UP000006158">
    <property type="component" value="Chromosome"/>
</dbReference>
<dbReference type="GO" id="GO:0005886">
    <property type="term" value="C:plasma membrane"/>
    <property type="evidence" value="ECO:0007669"/>
    <property type="project" value="UniProtKB-SubCell"/>
</dbReference>
<dbReference type="CDD" id="cd22693">
    <property type="entry name" value="FHA_FhaB-like"/>
    <property type="match status" value="1"/>
</dbReference>
<dbReference type="Gene3D" id="2.60.200.20">
    <property type="match status" value="1"/>
</dbReference>
<dbReference type="InterPro" id="IPR050923">
    <property type="entry name" value="Cell_Proc_Reg/RNA_Proc"/>
</dbReference>
<dbReference type="InterPro" id="IPR000253">
    <property type="entry name" value="FHA_dom"/>
</dbReference>
<dbReference type="InterPro" id="IPR008984">
    <property type="entry name" value="SMAD_FHA_dom_sf"/>
</dbReference>
<dbReference type="PANTHER" id="PTHR23308">
    <property type="entry name" value="NUCLEAR INHIBITOR OF PROTEIN PHOSPHATASE-1"/>
    <property type="match status" value="1"/>
</dbReference>
<dbReference type="Pfam" id="PF00498">
    <property type="entry name" value="FHA"/>
    <property type="match status" value="1"/>
</dbReference>
<dbReference type="SMART" id="SM00240">
    <property type="entry name" value="FHA"/>
    <property type="match status" value="1"/>
</dbReference>
<dbReference type="SUPFAM" id="SSF49879">
    <property type="entry name" value="SMAD/FHA domain"/>
    <property type="match status" value="1"/>
</dbReference>
<dbReference type="PROSITE" id="PS50006">
    <property type="entry name" value="FHA_DOMAIN"/>
    <property type="match status" value="1"/>
</dbReference>
<accession>A0QNG6</accession>
<gene>
    <name type="primary">fhaB</name>
    <name type="synonym">fipA</name>
    <name type="ordered locus">MSMEG_0034</name>
    <name type="ordered locus">MSMEI_0036</name>
</gene>
<reference key="1">
    <citation type="submission" date="2006-10" db="EMBL/GenBank/DDBJ databases">
        <authorList>
            <person name="Fleischmann R.D."/>
            <person name="Dodson R.J."/>
            <person name="Haft D.H."/>
            <person name="Merkel J.S."/>
            <person name="Nelson W.C."/>
            <person name="Fraser C.M."/>
        </authorList>
    </citation>
    <scope>NUCLEOTIDE SEQUENCE [LARGE SCALE GENOMIC DNA]</scope>
    <source>
        <strain>ATCC 700084 / mc(2)155</strain>
    </source>
</reference>
<reference key="2">
    <citation type="journal article" date="2007" name="Genome Biol.">
        <title>Interrupted coding sequences in Mycobacterium smegmatis: authentic mutations or sequencing errors?</title>
        <authorList>
            <person name="Deshayes C."/>
            <person name="Perrodou E."/>
            <person name="Gallien S."/>
            <person name="Euphrasie D."/>
            <person name="Schaeffer C."/>
            <person name="Van-Dorsselaer A."/>
            <person name="Poch O."/>
            <person name="Lecompte O."/>
            <person name="Reyrat J.-M."/>
        </authorList>
    </citation>
    <scope>NUCLEOTIDE SEQUENCE [LARGE SCALE GENOMIC DNA]</scope>
    <source>
        <strain>ATCC 700084 / mc(2)155</strain>
    </source>
</reference>
<reference key="3">
    <citation type="journal article" date="2009" name="Genome Res.">
        <title>Ortho-proteogenomics: multiple proteomes investigation through orthology and a new MS-based protocol.</title>
        <authorList>
            <person name="Gallien S."/>
            <person name="Perrodou E."/>
            <person name="Carapito C."/>
            <person name="Deshayes C."/>
            <person name="Reyrat J.-M."/>
            <person name="Van Dorsselaer A."/>
            <person name="Poch O."/>
            <person name="Schaeffer C."/>
            <person name="Lecompte O."/>
        </authorList>
    </citation>
    <scope>NUCLEOTIDE SEQUENCE [LARGE SCALE GENOMIC DNA]</scope>
    <source>
        <strain>ATCC 700084 / mc(2)155</strain>
    </source>
</reference>
<reference key="4">
    <citation type="journal article" date="2010" name="PLoS ONE">
        <title>Novel role of phosphorylation-dependent interaction between FtsZ and FipA in mycobacterial cell division.</title>
        <authorList>
            <person name="Sureka K."/>
            <person name="Hossain T."/>
            <person name="Mukherjee P."/>
            <person name="Chatterjee P."/>
            <person name="Datta P."/>
            <person name="Kundu M."/>
            <person name="Basu J."/>
        </authorList>
    </citation>
    <scope>RETRACTED PAPER</scope>
    <source>
        <strain>ATCC 700084 / mc(2)155</strain>
    </source>
</reference>
<reference key="5">
    <citation type="journal article" date="2022" name="PLoS ONE">
        <authorList>
            <consortium name="PLOS ONE Editors"/>
        </authorList>
    </citation>
    <scope>RETRACTION NOTICE OF PUBMED:20066037</scope>
</reference>
<organism>
    <name type="scientific">Mycolicibacterium smegmatis (strain ATCC 700084 / mc(2)155)</name>
    <name type="common">Mycobacterium smegmatis</name>
    <dbReference type="NCBI Taxonomy" id="246196"/>
    <lineage>
        <taxon>Bacteria</taxon>
        <taxon>Bacillati</taxon>
        <taxon>Actinomycetota</taxon>
        <taxon>Actinomycetes</taxon>
        <taxon>Mycobacteriales</taxon>
        <taxon>Mycobacteriaceae</taxon>
        <taxon>Mycolicibacterium</taxon>
    </lineage>
</organism>
<sequence>MQGLVLQLTRVGFLLLLWLFIWSVLRILRTDIYAPTGAVMVRRGLALRGSLLPNRQRRHVARQLVVTEGALAGTRITLGNQPVLIGRADDSTLVLTDDYASTRHARLSPRGSEWYVEDLGSTNGTYLDRAKVTTAVKVPIGAPVRIGKTVIELRP</sequence>